<organism>
    <name type="scientific">Borreliella burgdorferi (strain ZS7)</name>
    <name type="common">Borrelia burgdorferi</name>
    <dbReference type="NCBI Taxonomy" id="445985"/>
    <lineage>
        <taxon>Bacteria</taxon>
        <taxon>Pseudomonadati</taxon>
        <taxon>Spirochaetota</taxon>
        <taxon>Spirochaetia</taxon>
        <taxon>Spirochaetales</taxon>
        <taxon>Borreliaceae</taxon>
        <taxon>Borreliella</taxon>
    </lineage>
</organism>
<name>GATB_BORBZ</name>
<accession>B7J1R6</accession>
<comment type="function">
    <text evidence="1">Allows the formation of correctly charged Asn-tRNA(Asn) or Gln-tRNA(Gln) through the transamidation of misacylated Asp-tRNA(Asn) or Glu-tRNA(Gln) in organisms which lack either or both of asparaginyl-tRNA or glutaminyl-tRNA synthetases. The reaction takes place in the presence of glutamine and ATP through an activated phospho-Asp-tRNA(Asn) or phospho-Glu-tRNA(Gln).</text>
</comment>
<comment type="catalytic activity">
    <reaction evidence="1">
        <text>L-glutamyl-tRNA(Gln) + L-glutamine + ATP + H2O = L-glutaminyl-tRNA(Gln) + L-glutamate + ADP + phosphate + H(+)</text>
        <dbReference type="Rhea" id="RHEA:17521"/>
        <dbReference type="Rhea" id="RHEA-COMP:9681"/>
        <dbReference type="Rhea" id="RHEA-COMP:9684"/>
        <dbReference type="ChEBI" id="CHEBI:15377"/>
        <dbReference type="ChEBI" id="CHEBI:15378"/>
        <dbReference type="ChEBI" id="CHEBI:29985"/>
        <dbReference type="ChEBI" id="CHEBI:30616"/>
        <dbReference type="ChEBI" id="CHEBI:43474"/>
        <dbReference type="ChEBI" id="CHEBI:58359"/>
        <dbReference type="ChEBI" id="CHEBI:78520"/>
        <dbReference type="ChEBI" id="CHEBI:78521"/>
        <dbReference type="ChEBI" id="CHEBI:456216"/>
    </reaction>
</comment>
<comment type="catalytic activity">
    <reaction evidence="1">
        <text>L-aspartyl-tRNA(Asn) + L-glutamine + ATP + H2O = L-asparaginyl-tRNA(Asn) + L-glutamate + ADP + phosphate + 2 H(+)</text>
        <dbReference type="Rhea" id="RHEA:14513"/>
        <dbReference type="Rhea" id="RHEA-COMP:9674"/>
        <dbReference type="Rhea" id="RHEA-COMP:9677"/>
        <dbReference type="ChEBI" id="CHEBI:15377"/>
        <dbReference type="ChEBI" id="CHEBI:15378"/>
        <dbReference type="ChEBI" id="CHEBI:29985"/>
        <dbReference type="ChEBI" id="CHEBI:30616"/>
        <dbReference type="ChEBI" id="CHEBI:43474"/>
        <dbReference type="ChEBI" id="CHEBI:58359"/>
        <dbReference type="ChEBI" id="CHEBI:78515"/>
        <dbReference type="ChEBI" id="CHEBI:78516"/>
        <dbReference type="ChEBI" id="CHEBI:456216"/>
    </reaction>
</comment>
<comment type="subunit">
    <text evidence="1">Heterotrimer of A, B and C subunits.</text>
</comment>
<comment type="similarity">
    <text evidence="1">Belongs to the GatB/GatE family. GatB subfamily.</text>
</comment>
<gene>
    <name evidence="1" type="primary">gatB</name>
    <name type="ordered locus">BbuZS7_0345</name>
</gene>
<dbReference type="EC" id="6.3.5.-" evidence="1"/>
<dbReference type="EMBL" id="CP001205">
    <property type="protein sequence ID" value="ACK74540.1"/>
    <property type="molecule type" value="Genomic_DNA"/>
</dbReference>
<dbReference type="RefSeq" id="WP_002657789.1">
    <property type="nucleotide sequence ID" value="NC_011728.1"/>
</dbReference>
<dbReference type="SMR" id="B7J1R6"/>
<dbReference type="GeneID" id="56567770"/>
<dbReference type="KEGG" id="bbz:BbuZS7_0345"/>
<dbReference type="HOGENOM" id="CLU_019240_0_0_12"/>
<dbReference type="Proteomes" id="UP000006901">
    <property type="component" value="Chromosome"/>
</dbReference>
<dbReference type="GO" id="GO:0050566">
    <property type="term" value="F:asparaginyl-tRNA synthase (glutamine-hydrolyzing) activity"/>
    <property type="evidence" value="ECO:0007669"/>
    <property type="project" value="RHEA"/>
</dbReference>
<dbReference type="GO" id="GO:0005524">
    <property type="term" value="F:ATP binding"/>
    <property type="evidence" value="ECO:0007669"/>
    <property type="project" value="UniProtKB-KW"/>
</dbReference>
<dbReference type="GO" id="GO:0050567">
    <property type="term" value="F:glutaminyl-tRNA synthase (glutamine-hydrolyzing) activity"/>
    <property type="evidence" value="ECO:0007669"/>
    <property type="project" value="UniProtKB-UniRule"/>
</dbReference>
<dbReference type="GO" id="GO:0070681">
    <property type="term" value="P:glutaminyl-tRNAGln biosynthesis via transamidation"/>
    <property type="evidence" value="ECO:0007669"/>
    <property type="project" value="TreeGrafter"/>
</dbReference>
<dbReference type="GO" id="GO:0006412">
    <property type="term" value="P:translation"/>
    <property type="evidence" value="ECO:0007669"/>
    <property type="project" value="UniProtKB-UniRule"/>
</dbReference>
<dbReference type="FunFam" id="1.10.10.410:FF:000001">
    <property type="entry name" value="Aspartyl/glutamyl-tRNA(Asn/Gln) amidotransferase subunit B"/>
    <property type="match status" value="1"/>
</dbReference>
<dbReference type="Gene3D" id="1.10.10.410">
    <property type="match status" value="1"/>
</dbReference>
<dbReference type="HAMAP" id="MF_00121">
    <property type="entry name" value="GatB"/>
    <property type="match status" value="1"/>
</dbReference>
<dbReference type="InterPro" id="IPR017959">
    <property type="entry name" value="Asn/Gln-tRNA_amidoTrfase_suB/E"/>
</dbReference>
<dbReference type="InterPro" id="IPR006075">
    <property type="entry name" value="Asn/Gln-tRNA_Trfase_suB/E_cat"/>
</dbReference>
<dbReference type="InterPro" id="IPR018027">
    <property type="entry name" value="Asn/Gln_amidotransferase"/>
</dbReference>
<dbReference type="InterPro" id="IPR003789">
    <property type="entry name" value="Asn/Gln_tRNA_amidoTrase-B-like"/>
</dbReference>
<dbReference type="InterPro" id="IPR004413">
    <property type="entry name" value="GatB"/>
</dbReference>
<dbReference type="InterPro" id="IPR023168">
    <property type="entry name" value="GatB_Yqey_C_2"/>
</dbReference>
<dbReference type="InterPro" id="IPR017958">
    <property type="entry name" value="Gln-tRNA_amidoTrfase_suB_CS"/>
</dbReference>
<dbReference type="InterPro" id="IPR014746">
    <property type="entry name" value="Gln_synth/guanido_kin_cat_dom"/>
</dbReference>
<dbReference type="NCBIfam" id="TIGR00133">
    <property type="entry name" value="gatB"/>
    <property type="match status" value="1"/>
</dbReference>
<dbReference type="NCBIfam" id="NF004012">
    <property type="entry name" value="PRK05477.1-2"/>
    <property type="match status" value="1"/>
</dbReference>
<dbReference type="NCBIfam" id="NF004014">
    <property type="entry name" value="PRK05477.1-4"/>
    <property type="match status" value="1"/>
</dbReference>
<dbReference type="PANTHER" id="PTHR11659">
    <property type="entry name" value="GLUTAMYL-TRNA GLN AMIDOTRANSFERASE SUBUNIT B MITOCHONDRIAL AND PROKARYOTIC PET112-RELATED"/>
    <property type="match status" value="1"/>
</dbReference>
<dbReference type="PANTHER" id="PTHR11659:SF0">
    <property type="entry name" value="GLUTAMYL-TRNA(GLN) AMIDOTRANSFERASE SUBUNIT B, MITOCHONDRIAL"/>
    <property type="match status" value="1"/>
</dbReference>
<dbReference type="Pfam" id="PF02934">
    <property type="entry name" value="GatB_N"/>
    <property type="match status" value="1"/>
</dbReference>
<dbReference type="Pfam" id="PF02637">
    <property type="entry name" value="GatB_Yqey"/>
    <property type="match status" value="1"/>
</dbReference>
<dbReference type="SMART" id="SM00845">
    <property type="entry name" value="GatB_Yqey"/>
    <property type="match status" value="1"/>
</dbReference>
<dbReference type="SUPFAM" id="SSF89095">
    <property type="entry name" value="GatB/YqeY motif"/>
    <property type="match status" value="1"/>
</dbReference>
<dbReference type="SUPFAM" id="SSF55931">
    <property type="entry name" value="Glutamine synthetase/guanido kinase"/>
    <property type="match status" value="1"/>
</dbReference>
<dbReference type="PROSITE" id="PS01234">
    <property type="entry name" value="GATB"/>
    <property type="match status" value="1"/>
</dbReference>
<reference key="1">
    <citation type="journal article" date="2011" name="J. Bacteriol.">
        <title>Whole-genome sequences of thirteen isolates of Borrelia burgdorferi.</title>
        <authorList>
            <person name="Schutzer S.E."/>
            <person name="Fraser-Liggett C.M."/>
            <person name="Casjens S.R."/>
            <person name="Qiu W.G."/>
            <person name="Dunn J.J."/>
            <person name="Mongodin E.F."/>
            <person name="Luft B.J."/>
        </authorList>
    </citation>
    <scope>NUCLEOTIDE SEQUENCE [LARGE SCALE GENOMIC DNA]</scope>
    <source>
        <strain>ZS7</strain>
    </source>
</reference>
<proteinExistence type="inferred from homology"/>
<keyword id="KW-0067">ATP-binding</keyword>
<keyword id="KW-0436">Ligase</keyword>
<keyword id="KW-0547">Nucleotide-binding</keyword>
<keyword id="KW-0648">Protein biosynthesis</keyword>
<sequence length="485" mass="54521">MEYKLVIGLEIHVQLGLKTKAFCGCKNEFGGVPNSRVCPICLGLPGSLPSVNVELINSAILAGHATNSKIRNVVKFDRKHYYYPDLPKGYQISQNDKPICEGGSLLIETPSGPKKINIIRIHMEEDSGKSLHLLDSENQSYVDFNRSGAPLLEIVSAPDINSGDEAVAFLSSLREIFRYLDLSECNMENGSFRCDVNVNLIVKENGVEHKTPIAEIKNLNSFKSIKAAIEYEELRQQQEWIQFKKTLNSCGKHTRGFDDRSGVTVIQRNKETVSDYRYFQEPDLPLIEIDDSYIDNIKNLKLIELPFHARIRLKGQYGLSDFDVITLTADKHLLKYFEEAVINSSDPKKVANWILSEVLSVLNDKGISVLEFNLLPSYITELVEFIVAGKISGKMAKRVFSEMMTRGVSASVVISENQLEQVSDKFVIKQIVLEVLDENPKSIELYKKGKDHAIKFMMGQIMKKSSGKINPILANEILLESLSNV</sequence>
<feature type="chain" id="PRO_1000117615" description="Aspartyl/glutamyl-tRNA(Asn/Gln) amidotransferase subunit B">
    <location>
        <begin position="1"/>
        <end position="485"/>
    </location>
</feature>
<evidence type="ECO:0000255" key="1">
    <source>
        <dbReference type="HAMAP-Rule" id="MF_00121"/>
    </source>
</evidence>
<protein>
    <recommendedName>
        <fullName evidence="1">Aspartyl/glutamyl-tRNA(Asn/Gln) amidotransferase subunit B</fullName>
        <shortName evidence="1">Asp/Glu-ADT subunit B</shortName>
        <ecNumber evidence="1">6.3.5.-</ecNumber>
    </recommendedName>
</protein>